<organism>
    <name type="scientific">Acinetobacter baumannii (strain AYE)</name>
    <dbReference type="NCBI Taxonomy" id="509173"/>
    <lineage>
        <taxon>Bacteria</taxon>
        <taxon>Pseudomonadati</taxon>
        <taxon>Pseudomonadota</taxon>
        <taxon>Gammaproteobacteria</taxon>
        <taxon>Moraxellales</taxon>
        <taxon>Moraxellaceae</taxon>
        <taxon>Acinetobacter</taxon>
        <taxon>Acinetobacter calcoaceticus/baumannii complex</taxon>
    </lineage>
</organism>
<comment type="function">
    <text evidence="1">Transforms N(2)-succinylglutamate into succinate and glutamate.</text>
</comment>
<comment type="catalytic activity">
    <reaction evidence="1">
        <text>N-succinyl-L-glutamate + H2O = L-glutamate + succinate</text>
        <dbReference type="Rhea" id="RHEA:15169"/>
        <dbReference type="ChEBI" id="CHEBI:15377"/>
        <dbReference type="ChEBI" id="CHEBI:29985"/>
        <dbReference type="ChEBI" id="CHEBI:30031"/>
        <dbReference type="ChEBI" id="CHEBI:58763"/>
        <dbReference type="EC" id="3.5.1.96"/>
    </reaction>
</comment>
<comment type="cofactor">
    <cofactor evidence="1">
        <name>Zn(2+)</name>
        <dbReference type="ChEBI" id="CHEBI:29105"/>
    </cofactor>
    <text evidence="1">Binds 1 zinc ion per subunit.</text>
</comment>
<comment type="pathway">
    <text evidence="1">Amino-acid degradation; L-arginine degradation via AST pathway; L-glutamate and succinate from L-arginine: step 5/5.</text>
</comment>
<comment type="similarity">
    <text evidence="1">Belongs to the AspA/AstE family. Succinylglutamate desuccinylase subfamily.</text>
</comment>
<protein>
    <recommendedName>
        <fullName evidence="1">Succinylglutamate desuccinylase</fullName>
        <ecNumber evidence="1">3.5.1.96</ecNumber>
    </recommendedName>
</protein>
<reference key="1">
    <citation type="journal article" date="2008" name="PLoS ONE">
        <title>Comparative analysis of Acinetobacters: three genomes for three lifestyles.</title>
        <authorList>
            <person name="Vallenet D."/>
            <person name="Nordmann P."/>
            <person name="Barbe V."/>
            <person name="Poirel L."/>
            <person name="Mangenot S."/>
            <person name="Bataille E."/>
            <person name="Dossat C."/>
            <person name="Gas S."/>
            <person name="Kreimeyer A."/>
            <person name="Lenoble P."/>
            <person name="Oztas S."/>
            <person name="Poulain J."/>
            <person name="Segurens B."/>
            <person name="Robert C."/>
            <person name="Abergel C."/>
            <person name="Claverie J.-M."/>
            <person name="Raoult D."/>
            <person name="Medigue C."/>
            <person name="Weissenbach J."/>
            <person name="Cruveiller S."/>
        </authorList>
    </citation>
    <scope>NUCLEOTIDE SEQUENCE [LARGE SCALE GENOMIC DNA]</scope>
    <source>
        <strain>AYE</strain>
    </source>
</reference>
<proteinExistence type="inferred from homology"/>
<dbReference type="EC" id="3.5.1.96" evidence="1"/>
<dbReference type="EMBL" id="CU459141">
    <property type="protein sequence ID" value="CAM85332.1"/>
    <property type="molecule type" value="Genomic_DNA"/>
</dbReference>
<dbReference type="RefSeq" id="WP_001150816.1">
    <property type="nucleotide sequence ID" value="NZ_JBDGFB010000011.1"/>
</dbReference>
<dbReference type="SMR" id="B0V7X4"/>
<dbReference type="EnsemblBacteria" id="CAM85332">
    <property type="protein sequence ID" value="CAM85332"/>
    <property type="gene ID" value="ABAYE0356"/>
</dbReference>
<dbReference type="KEGG" id="aby:ABAYE0356"/>
<dbReference type="HOGENOM" id="CLU_071608_0_0_6"/>
<dbReference type="UniPathway" id="UPA00185">
    <property type="reaction ID" value="UER00283"/>
</dbReference>
<dbReference type="GO" id="GO:0016788">
    <property type="term" value="F:hydrolase activity, acting on ester bonds"/>
    <property type="evidence" value="ECO:0007669"/>
    <property type="project" value="UniProtKB-UniRule"/>
</dbReference>
<dbReference type="GO" id="GO:0009017">
    <property type="term" value="F:succinylglutamate desuccinylase activity"/>
    <property type="evidence" value="ECO:0007669"/>
    <property type="project" value="UniProtKB-EC"/>
</dbReference>
<dbReference type="GO" id="GO:0008270">
    <property type="term" value="F:zinc ion binding"/>
    <property type="evidence" value="ECO:0007669"/>
    <property type="project" value="UniProtKB-UniRule"/>
</dbReference>
<dbReference type="GO" id="GO:0019544">
    <property type="term" value="P:arginine catabolic process to glutamate"/>
    <property type="evidence" value="ECO:0007669"/>
    <property type="project" value="UniProtKB-UniRule"/>
</dbReference>
<dbReference type="GO" id="GO:0019545">
    <property type="term" value="P:arginine catabolic process to succinate"/>
    <property type="evidence" value="ECO:0007669"/>
    <property type="project" value="UniProtKB-UniRule"/>
</dbReference>
<dbReference type="CDD" id="cd03855">
    <property type="entry name" value="M14_ASTE"/>
    <property type="match status" value="1"/>
</dbReference>
<dbReference type="Gene3D" id="3.40.630.10">
    <property type="entry name" value="Zn peptidases"/>
    <property type="match status" value="1"/>
</dbReference>
<dbReference type="HAMAP" id="MF_00767">
    <property type="entry name" value="Arg_catab_AstE"/>
    <property type="match status" value="1"/>
</dbReference>
<dbReference type="InterPro" id="IPR050178">
    <property type="entry name" value="AspA/AstE_fam"/>
</dbReference>
<dbReference type="InterPro" id="IPR055438">
    <property type="entry name" value="AstE_AspA_cat"/>
</dbReference>
<dbReference type="InterPro" id="IPR007036">
    <property type="entry name" value="Aste_AspA_hybrid_dom"/>
</dbReference>
<dbReference type="InterPro" id="IPR016681">
    <property type="entry name" value="SuccinylGlu_desuccinylase"/>
</dbReference>
<dbReference type="NCBIfam" id="TIGR03242">
    <property type="entry name" value="arg_catab_astE"/>
    <property type="match status" value="1"/>
</dbReference>
<dbReference type="NCBIfam" id="NF003706">
    <property type="entry name" value="PRK05324.1"/>
    <property type="match status" value="1"/>
</dbReference>
<dbReference type="PANTHER" id="PTHR15162">
    <property type="entry name" value="ASPARTOACYLASE"/>
    <property type="match status" value="1"/>
</dbReference>
<dbReference type="PANTHER" id="PTHR15162:SF7">
    <property type="entry name" value="SUCCINYLGLUTAMATE DESUCCINYLASE"/>
    <property type="match status" value="1"/>
</dbReference>
<dbReference type="Pfam" id="PF24827">
    <property type="entry name" value="AstE_AspA_cat"/>
    <property type="match status" value="1"/>
</dbReference>
<dbReference type="Pfam" id="PF04952">
    <property type="entry name" value="AstE_AspA_hybrid"/>
    <property type="match status" value="1"/>
</dbReference>
<dbReference type="PIRSF" id="PIRSF017020">
    <property type="entry name" value="AstE"/>
    <property type="match status" value="1"/>
</dbReference>
<dbReference type="SUPFAM" id="SSF53187">
    <property type="entry name" value="Zn-dependent exopeptidases"/>
    <property type="match status" value="1"/>
</dbReference>
<feature type="chain" id="PRO_1000133623" description="Succinylglutamate desuccinylase">
    <location>
        <begin position="1"/>
        <end position="324"/>
    </location>
</feature>
<feature type="active site" evidence="1">
    <location>
        <position position="211"/>
    </location>
</feature>
<feature type="binding site" evidence="1">
    <location>
        <position position="53"/>
    </location>
    <ligand>
        <name>Zn(2+)</name>
        <dbReference type="ChEBI" id="CHEBI:29105"/>
    </ligand>
</feature>
<feature type="binding site" evidence="1">
    <location>
        <position position="56"/>
    </location>
    <ligand>
        <name>Zn(2+)</name>
        <dbReference type="ChEBI" id="CHEBI:29105"/>
    </ligand>
</feature>
<feature type="binding site" evidence="1">
    <location>
        <position position="148"/>
    </location>
    <ligand>
        <name>Zn(2+)</name>
        <dbReference type="ChEBI" id="CHEBI:29105"/>
    </ligand>
</feature>
<name>ASTE_ACIBY</name>
<keyword id="KW-0056">Arginine metabolism</keyword>
<keyword id="KW-0378">Hydrolase</keyword>
<keyword id="KW-0479">Metal-binding</keyword>
<keyword id="KW-0862">Zinc</keyword>
<sequence>MQDFLALTLQGEQPATREGKQANFSWRWLGEGLLECTPHAQYDKAVVLSAGVHGNETAPIELLSHLCTDLFAGRLKLAVRLLLVLGNPYAMRQGKRYVHDDVNRMFCGGYKNLPVTEESKRAEVLEQTVATFFQESSSQAKRYHYDLHTAIRASLLPTFALFPYQTHGYDADLTASLEAADLDALVYHNALGKTFTHFTSENFKAASATLELGKALPFGQNDLSQFASIDEVIRNVVSEQALPVRNKPKIRVFQVSDSLIKKDEEFHMNLSAEAPNFSTFTKGEIIATQPSGNYVVEQDQVWILFPNPNVKIGLRAGLVLTETI</sequence>
<evidence type="ECO:0000255" key="1">
    <source>
        <dbReference type="HAMAP-Rule" id="MF_00767"/>
    </source>
</evidence>
<accession>B0V7X4</accession>
<gene>
    <name evidence="1" type="primary">astE</name>
    <name type="ordered locus">ABAYE0356</name>
</gene>